<proteinExistence type="evidence at protein level"/>
<dbReference type="EMBL" id="AF079972">
    <property type="protein sequence ID" value="AAD46734.1"/>
    <property type="molecule type" value="mRNA"/>
</dbReference>
<dbReference type="CCDS" id="CCDS27620.1"/>
<dbReference type="RefSeq" id="NP_082471.2">
    <property type="nucleotide sequence ID" value="NM_028195.3"/>
</dbReference>
<dbReference type="SMR" id="Q80YW0"/>
<dbReference type="BioGRID" id="215305">
    <property type="interactions" value="3"/>
</dbReference>
<dbReference type="FunCoup" id="Q80YW0">
    <property type="interactions" value="730"/>
</dbReference>
<dbReference type="STRING" id="10090.ENSMUSP00000042698"/>
<dbReference type="iPTMnet" id="Q80YW0"/>
<dbReference type="PhosphoSitePlus" id="Q80YW0"/>
<dbReference type="PaxDb" id="10090-ENSMUSP00000042698"/>
<dbReference type="ProteomicsDB" id="285444"/>
<dbReference type="Antibodypedia" id="25912">
    <property type="antibodies" value="200 antibodies from 25 providers"/>
</dbReference>
<dbReference type="DNASU" id="72318"/>
<dbReference type="Ensembl" id="ENSMUST00000043069.6">
    <property type="protein sequence ID" value="ENSMUSP00000042698.6"/>
    <property type="gene ID" value="ENSMUSG00000018008.9"/>
</dbReference>
<dbReference type="GeneID" id="72318"/>
<dbReference type="KEGG" id="mmu:72318"/>
<dbReference type="UCSC" id="uc007wps.2">
    <property type="organism name" value="mouse"/>
</dbReference>
<dbReference type="AGR" id="MGI:2441702"/>
<dbReference type="CTD" id="27128"/>
<dbReference type="MGI" id="MGI:2441702">
    <property type="gene designation" value="Cyth4"/>
</dbReference>
<dbReference type="VEuPathDB" id="HostDB:ENSMUSG00000018008"/>
<dbReference type="eggNOG" id="KOG0930">
    <property type="taxonomic scope" value="Eukaryota"/>
</dbReference>
<dbReference type="GeneTree" id="ENSGT00940000160865"/>
<dbReference type="HOGENOM" id="CLU_032820_3_0_1"/>
<dbReference type="InParanoid" id="Q80YW0"/>
<dbReference type="OMA" id="LYNPNCK"/>
<dbReference type="OrthoDB" id="430364at2759"/>
<dbReference type="PhylomeDB" id="Q80YW0"/>
<dbReference type="TreeFam" id="TF352091"/>
<dbReference type="Reactome" id="R-MMU-6811438">
    <property type="pathway name" value="Intra-Golgi traffic"/>
</dbReference>
<dbReference type="BioGRID-ORCS" id="72318">
    <property type="hits" value="1 hit in 77 CRISPR screens"/>
</dbReference>
<dbReference type="ChiTaRS" id="Cyth4">
    <property type="organism name" value="mouse"/>
</dbReference>
<dbReference type="PRO" id="PR:Q80YW0"/>
<dbReference type="Proteomes" id="UP000000589">
    <property type="component" value="Chromosome 15"/>
</dbReference>
<dbReference type="RNAct" id="Q80YW0">
    <property type="molecule type" value="protein"/>
</dbReference>
<dbReference type="Bgee" id="ENSMUSG00000018008">
    <property type="expression patterns" value="Expressed in granulocyte and 114 other cell types or tissues"/>
</dbReference>
<dbReference type="ExpressionAtlas" id="Q80YW0">
    <property type="expression patterns" value="baseline and differential"/>
</dbReference>
<dbReference type="GO" id="GO:0030054">
    <property type="term" value="C:cell junction"/>
    <property type="evidence" value="ECO:0007669"/>
    <property type="project" value="UniProtKB-ARBA"/>
</dbReference>
<dbReference type="GO" id="GO:0034451">
    <property type="term" value="C:centriolar satellite"/>
    <property type="evidence" value="ECO:0007669"/>
    <property type="project" value="Ensembl"/>
</dbReference>
<dbReference type="GO" id="GO:0005829">
    <property type="term" value="C:cytosol"/>
    <property type="evidence" value="ECO:0007669"/>
    <property type="project" value="Ensembl"/>
</dbReference>
<dbReference type="GO" id="GO:0045171">
    <property type="term" value="C:intercellular bridge"/>
    <property type="evidence" value="ECO:0007669"/>
    <property type="project" value="Ensembl"/>
</dbReference>
<dbReference type="GO" id="GO:0005886">
    <property type="term" value="C:plasma membrane"/>
    <property type="evidence" value="ECO:0000250"/>
    <property type="project" value="UniProtKB"/>
</dbReference>
<dbReference type="GO" id="GO:0005085">
    <property type="term" value="F:guanyl-nucleotide exchange factor activity"/>
    <property type="evidence" value="ECO:0000250"/>
    <property type="project" value="UniProtKB"/>
</dbReference>
<dbReference type="GO" id="GO:0008289">
    <property type="term" value="F:lipid binding"/>
    <property type="evidence" value="ECO:0007669"/>
    <property type="project" value="UniProtKB-KW"/>
</dbReference>
<dbReference type="GO" id="GO:0032012">
    <property type="term" value="P:regulation of ARF protein signal transduction"/>
    <property type="evidence" value="ECO:0007669"/>
    <property type="project" value="InterPro"/>
</dbReference>
<dbReference type="CDD" id="cd01252">
    <property type="entry name" value="PH_GRP1-like"/>
    <property type="match status" value="1"/>
</dbReference>
<dbReference type="CDD" id="cd00171">
    <property type="entry name" value="Sec7"/>
    <property type="match status" value="1"/>
</dbReference>
<dbReference type="FunFam" id="1.10.1000.11:FF:000002">
    <property type="entry name" value="Cytohesin 1"/>
    <property type="match status" value="1"/>
</dbReference>
<dbReference type="FunFam" id="1.10.220.20:FF:000003">
    <property type="entry name" value="Cytohesin 1"/>
    <property type="match status" value="1"/>
</dbReference>
<dbReference type="FunFam" id="2.30.29.30:FF:000009">
    <property type="entry name" value="Cytohesin 1"/>
    <property type="match status" value="1"/>
</dbReference>
<dbReference type="Gene3D" id="1.10.220.20">
    <property type="match status" value="1"/>
</dbReference>
<dbReference type="Gene3D" id="1.10.1000.11">
    <property type="entry name" value="Arf Nucleotide-binding Site Opener,domain 2"/>
    <property type="match status" value="1"/>
</dbReference>
<dbReference type="Gene3D" id="2.30.29.30">
    <property type="entry name" value="Pleckstrin-homology domain (PH domain)/Phosphotyrosine-binding domain (PTB)"/>
    <property type="match status" value="1"/>
</dbReference>
<dbReference type="InterPro" id="IPR011993">
    <property type="entry name" value="PH-like_dom_sf"/>
</dbReference>
<dbReference type="InterPro" id="IPR001849">
    <property type="entry name" value="PH_domain"/>
</dbReference>
<dbReference type="InterPro" id="IPR023394">
    <property type="entry name" value="Sec7_C_sf"/>
</dbReference>
<dbReference type="InterPro" id="IPR000904">
    <property type="entry name" value="Sec7_dom"/>
</dbReference>
<dbReference type="InterPro" id="IPR035999">
    <property type="entry name" value="Sec7_dom_sf"/>
</dbReference>
<dbReference type="PANTHER" id="PTHR10663:SF323">
    <property type="entry name" value="CYTOHESIN-4"/>
    <property type="match status" value="1"/>
</dbReference>
<dbReference type="PANTHER" id="PTHR10663">
    <property type="entry name" value="GUANYL-NUCLEOTIDE EXCHANGE FACTOR"/>
    <property type="match status" value="1"/>
</dbReference>
<dbReference type="Pfam" id="PF00169">
    <property type="entry name" value="PH"/>
    <property type="match status" value="1"/>
</dbReference>
<dbReference type="Pfam" id="PF01369">
    <property type="entry name" value="Sec7"/>
    <property type="match status" value="1"/>
</dbReference>
<dbReference type="SMART" id="SM00233">
    <property type="entry name" value="PH"/>
    <property type="match status" value="1"/>
</dbReference>
<dbReference type="SMART" id="SM00222">
    <property type="entry name" value="Sec7"/>
    <property type="match status" value="1"/>
</dbReference>
<dbReference type="SUPFAM" id="SSF50729">
    <property type="entry name" value="PH domain-like"/>
    <property type="match status" value="1"/>
</dbReference>
<dbReference type="SUPFAM" id="SSF48425">
    <property type="entry name" value="Sec7 domain"/>
    <property type="match status" value="1"/>
</dbReference>
<dbReference type="PROSITE" id="PS50003">
    <property type="entry name" value="PH_DOMAIN"/>
    <property type="match status" value="1"/>
</dbReference>
<dbReference type="PROSITE" id="PS50190">
    <property type="entry name" value="SEC7"/>
    <property type="match status" value="1"/>
</dbReference>
<keyword id="KW-1003">Cell membrane</keyword>
<keyword id="KW-0175">Coiled coil</keyword>
<keyword id="KW-0344">Guanine-nucleotide releasing factor</keyword>
<keyword id="KW-0446">Lipid-binding</keyword>
<keyword id="KW-0472">Membrane</keyword>
<keyword id="KW-1185">Reference proteome</keyword>
<evidence type="ECO:0000250" key="1"/>
<evidence type="ECO:0000255" key="2"/>
<evidence type="ECO:0000255" key="3">
    <source>
        <dbReference type="PROSITE-ProRule" id="PRU00145"/>
    </source>
</evidence>
<evidence type="ECO:0000255" key="4">
    <source>
        <dbReference type="PROSITE-ProRule" id="PRU00189"/>
    </source>
</evidence>
<comment type="function">
    <text evidence="1">Promotes guanine-nucleotide exchange on ARF1 and ARF5. Promotes the activation of ARF factors through replacement of GDP with GTP (By similarity).</text>
</comment>
<comment type="subcellular location">
    <subcellularLocation>
        <location evidence="1">Cell membrane</location>
        <topology evidence="1">Peripheral membrane protein</topology>
    </subcellularLocation>
</comment>
<comment type="domain">
    <text evidence="1">Binds via its PH domain to the inositol head group of phosphatidylinositol 3,4,5-trisphosphate.</text>
</comment>
<comment type="domain">
    <text evidence="1">Autoinhibited by its C-terminal basic region.</text>
</comment>
<gene>
    <name type="primary">Cyth4</name>
    <name type="synonym">Pscd4</name>
</gene>
<organism>
    <name type="scientific">Mus musculus</name>
    <name type="common">Mouse</name>
    <dbReference type="NCBI Taxonomy" id="10090"/>
    <lineage>
        <taxon>Eukaryota</taxon>
        <taxon>Metazoa</taxon>
        <taxon>Chordata</taxon>
        <taxon>Craniata</taxon>
        <taxon>Vertebrata</taxon>
        <taxon>Euteleostomi</taxon>
        <taxon>Mammalia</taxon>
        <taxon>Eutheria</taxon>
        <taxon>Euarchontoglires</taxon>
        <taxon>Glires</taxon>
        <taxon>Rodentia</taxon>
        <taxon>Myomorpha</taxon>
        <taxon>Muroidea</taxon>
        <taxon>Muridae</taxon>
        <taxon>Murinae</taxon>
        <taxon>Mus</taxon>
        <taxon>Mus</taxon>
    </lineage>
</organism>
<reference key="1">
    <citation type="submission" date="1998-07" db="EMBL/GenBank/DDBJ databases">
        <title>Mouse cytohesin-4, a novel Sec7 and PH domain containing and integrin associated protein.</title>
        <authorList>
            <person name="Liu D."/>
            <person name="Zhang H."/>
            <person name="Lu J."/>
        </authorList>
    </citation>
    <scope>NUCLEOTIDE SEQUENCE [MRNA]</scope>
</reference>
<reference key="2">
    <citation type="journal article" date="2010" name="Cell">
        <title>A tissue-specific atlas of mouse protein phosphorylation and expression.</title>
        <authorList>
            <person name="Huttlin E.L."/>
            <person name="Jedrychowski M.P."/>
            <person name="Elias J.E."/>
            <person name="Goswami T."/>
            <person name="Rad R."/>
            <person name="Beausoleil S.A."/>
            <person name="Villen J."/>
            <person name="Haas W."/>
            <person name="Sowa M.E."/>
            <person name="Gygi S.P."/>
        </authorList>
    </citation>
    <scope>IDENTIFICATION BY MASS SPECTROMETRY [LARGE SCALE ANALYSIS]</scope>
    <source>
        <tissue>Spleen</tissue>
    </source>
</reference>
<sequence>MDVCHTDPAELSSGEAKELQQIKWHRKQLLEDIQKLKDEIADVFAQIDCFESTEESRMAQKEKEMCIGRKKFNMDPNKGIQYLIEHKLLTSDVQDIAQFLYKGDGLNKTAIGTYLGEKDPINLQVLQAFVDCHEFANLNLVQALRQFLWSFRLPGEAQKIDRMMEAFAARYCLCNPGVFRSTDTCYVLSFSVIMLNTGLHNPNVRDRPPFERFVTMNRGINSGSDLPEEQLRNLFDSIKSEPFSIPEDDGGDLTHTFFNPDREGWLLKLGGRVKTWKRRWFILTDNCLYYFEFTTDKEPRGIIPLENLSVQKVEDPKKPFCLELYNPSCRGQKIKACKTDGDGKVVEGKHESYRISAANAEERDQWIEAIRASITRVPFYDLLSARKKKIVGK</sequence>
<feature type="chain" id="PRO_0000120204" description="Cytohesin-4">
    <location>
        <begin position="1"/>
        <end position="393"/>
    </location>
</feature>
<feature type="domain" description="SEC7" evidence="4">
    <location>
        <begin position="54"/>
        <end position="241"/>
    </location>
</feature>
<feature type="domain" description="PH" evidence="3">
    <location>
        <begin position="259"/>
        <end position="375"/>
    </location>
</feature>
<feature type="region of interest" description="C-terminal autoinhibitory region" evidence="1">
    <location>
        <begin position="386"/>
        <end position="393"/>
    </location>
</feature>
<feature type="coiled-coil region" evidence="2">
    <location>
        <begin position="13"/>
        <end position="56"/>
    </location>
</feature>
<feature type="binding site" evidence="1">
    <location>
        <begin position="268"/>
        <end position="275"/>
    </location>
    <ligand>
        <name>a 1,2-diacyl-sn-glycero-3-phospho-(1D-myo-inositol-3,4,5-trisphosphate)</name>
        <dbReference type="ChEBI" id="CHEBI:57836"/>
    </ligand>
</feature>
<feature type="binding site" evidence="1">
    <location>
        <position position="279"/>
    </location>
    <ligand>
        <name>a 1,2-diacyl-sn-glycero-3-phospho-(1D-myo-inositol-3,4,5-trisphosphate)</name>
        <dbReference type="ChEBI" id="CHEBI:57836"/>
    </ligand>
</feature>
<feature type="binding site" evidence="1">
    <location>
        <position position="290"/>
    </location>
    <ligand>
        <name>a 1,2-diacyl-sn-glycero-3-phospho-(1D-myo-inositol-3,4,5-trisphosphate)</name>
        <dbReference type="ChEBI" id="CHEBI:57836"/>
    </ligand>
</feature>
<feature type="binding site" evidence="1">
    <location>
        <position position="300"/>
    </location>
    <ligand>
        <name>a 1,2-diacyl-sn-glycero-3-phospho-(1D-myo-inositol-3,4,5-trisphosphate)</name>
        <dbReference type="ChEBI" id="CHEBI:57836"/>
    </ligand>
</feature>
<name>CYH4_MOUSE</name>
<accession>Q80YW0</accession>
<protein>
    <recommendedName>
        <fullName>Cytohesin-4</fullName>
    </recommendedName>
    <alternativeName>
        <fullName>PH, SEC7 and coiled-coil domain-containing protein 4</fullName>
    </alternativeName>
</protein>